<feature type="chain" id="PRO_0000128074" description="Uncharacterized protein AF_1942">
    <location>
        <begin position="1"/>
        <end position="184"/>
    </location>
</feature>
<proteinExistence type="predicted"/>
<accession>O28337</accession>
<reference key="1">
    <citation type="journal article" date="1997" name="Nature">
        <title>The complete genome sequence of the hyperthermophilic, sulphate-reducing archaeon Archaeoglobus fulgidus.</title>
        <authorList>
            <person name="Klenk H.-P."/>
            <person name="Clayton R.A."/>
            <person name="Tomb J.-F."/>
            <person name="White O."/>
            <person name="Nelson K.E."/>
            <person name="Ketchum K.A."/>
            <person name="Dodson R.J."/>
            <person name="Gwinn M.L."/>
            <person name="Hickey E.K."/>
            <person name="Peterson J.D."/>
            <person name="Richardson D.L."/>
            <person name="Kerlavage A.R."/>
            <person name="Graham D.E."/>
            <person name="Kyrpides N.C."/>
            <person name="Fleischmann R.D."/>
            <person name="Quackenbush J."/>
            <person name="Lee N.H."/>
            <person name="Sutton G.G."/>
            <person name="Gill S.R."/>
            <person name="Kirkness E.F."/>
            <person name="Dougherty B.A."/>
            <person name="McKenney K."/>
            <person name="Adams M.D."/>
            <person name="Loftus B.J."/>
            <person name="Peterson S.N."/>
            <person name="Reich C.I."/>
            <person name="McNeil L.K."/>
            <person name="Badger J.H."/>
            <person name="Glodek A."/>
            <person name="Zhou L."/>
            <person name="Overbeek R."/>
            <person name="Gocayne J.D."/>
            <person name="Weidman J.F."/>
            <person name="McDonald L.A."/>
            <person name="Utterback T.R."/>
            <person name="Cotton M.D."/>
            <person name="Spriggs T."/>
            <person name="Artiach P."/>
            <person name="Kaine B.P."/>
            <person name="Sykes S.M."/>
            <person name="Sadow P.W."/>
            <person name="D'Andrea K.P."/>
            <person name="Bowman C."/>
            <person name="Fujii C."/>
            <person name="Garland S.A."/>
            <person name="Mason T.M."/>
            <person name="Olsen G.J."/>
            <person name="Fraser C.M."/>
            <person name="Smith H.O."/>
            <person name="Woese C.R."/>
            <person name="Venter J.C."/>
        </authorList>
    </citation>
    <scope>NUCLEOTIDE SEQUENCE [LARGE SCALE GENOMIC DNA]</scope>
    <source>
        <strain>ATCC 49558 / DSM 4304 / JCM 9628 / NBRC 100126 / VC-16</strain>
    </source>
</reference>
<dbReference type="EMBL" id="AE000782">
    <property type="protein sequence ID" value="AAB89316.1"/>
    <property type="molecule type" value="Genomic_DNA"/>
</dbReference>
<dbReference type="PIR" id="E69492">
    <property type="entry name" value="E69492"/>
</dbReference>
<dbReference type="STRING" id="224325.AF_1942"/>
<dbReference type="PaxDb" id="224325-AF_1942"/>
<dbReference type="EnsemblBacteria" id="AAB89316">
    <property type="protein sequence ID" value="AAB89316"/>
    <property type="gene ID" value="AF_1942"/>
</dbReference>
<dbReference type="KEGG" id="afu:AF_1942"/>
<dbReference type="eggNOG" id="arCOG02532">
    <property type="taxonomic scope" value="Archaea"/>
</dbReference>
<dbReference type="HOGENOM" id="CLU_1465019_0_0_2"/>
<dbReference type="Proteomes" id="UP000002199">
    <property type="component" value="Chromosome"/>
</dbReference>
<sequence>MATASADTLCSQQEDESWGNLMLHGFQVEAYKPVRVGDKVCYSFYLKNTGSSDVTLGKKGVYLHTNDGDLSSNSGATISPGKSIFVKDCFIASSSGEWTTYPGVCIITAKGEFCHNFETSCTFDVFIECPENWNCMTAEDASQGNYIRYSDELCGYTITGFTAMNKVRCTATEKLLNALQALGV</sequence>
<name>Y1942_ARCFU</name>
<keyword id="KW-1185">Reference proteome</keyword>
<gene>
    <name type="ordered locus">AF_1942</name>
</gene>
<organism>
    <name type="scientific">Archaeoglobus fulgidus (strain ATCC 49558 / DSM 4304 / JCM 9628 / NBRC 100126 / VC-16)</name>
    <dbReference type="NCBI Taxonomy" id="224325"/>
    <lineage>
        <taxon>Archaea</taxon>
        <taxon>Methanobacteriati</taxon>
        <taxon>Methanobacteriota</taxon>
        <taxon>Archaeoglobi</taxon>
        <taxon>Archaeoglobales</taxon>
        <taxon>Archaeoglobaceae</taxon>
        <taxon>Archaeoglobus</taxon>
    </lineage>
</organism>
<protein>
    <recommendedName>
        <fullName>Uncharacterized protein AF_1942</fullName>
    </recommendedName>
</protein>